<protein>
    <recommendedName>
        <fullName evidence="1">Glycogen synthase 2</fullName>
        <ecNumber evidence="1">2.4.1.21</ecNumber>
    </recommendedName>
    <alternativeName>
        <fullName evidence="1">Starch [bacterial glycogen] synthase 2</fullName>
    </alternativeName>
</protein>
<organism>
    <name type="scientific">Synechococcus sp. (strain JA-2-3B'a(2-13))</name>
    <name type="common">Cyanobacteria bacterium Yellowstone B-Prime</name>
    <dbReference type="NCBI Taxonomy" id="321332"/>
    <lineage>
        <taxon>Bacteria</taxon>
        <taxon>Bacillati</taxon>
        <taxon>Cyanobacteriota</taxon>
        <taxon>Cyanophyceae</taxon>
        <taxon>Synechococcales</taxon>
        <taxon>Synechococcaceae</taxon>
        <taxon>Synechococcus</taxon>
    </lineage>
</organism>
<comment type="function">
    <text evidence="1">Synthesizes alpha-1,4-glucan chains using ADP-glucose.</text>
</comment>
<comment type="catalytic activity">
    <reaction evidence="1">
        <text>[(1-&gt;4)-alpha-D-glucosyl](n) + ADP-alpha-D-glucose = [(1-&gt;4)-alpha-D-glucosyl](n+1) + ADP + H(+)</text>
        <dbReference type="Rhea" id="RHEA:18189"/>
        <dbReference type="Rhea" id="RHEA-COMP:9584"/>
        <dbReference type="Rhea" id="RHEA-COMP:9587"/>
        <dbReference type="ChEBI" id="CHEBI:15378"/>
        <dbReference type="ChEBI" id="CHEBI:15444"/>
        <dbReference type="ChEBI" id="CHEBI:57498"/>
        <dbReference type="ChEBI" id="CHEBI:456216"/>
        <dbReference type="EC" id="2.4.1.21"/>
    </reaction>
</comment>
<comment type="pathway">
    <text evidence="1">Glycan biosynthesis; glycogen biosynthesis.</text>
</comment>
<comment type="similarity">
    <text evidence="1">Belongs to the glycosyltransferase 1 family. Bacterial/plant glycogen synthase subfamily.</text>
</comment>
<feature type="chain" id="PRO_0000241803" description="Glycogen synthase 2">
    <location>
        <begin position="1"/>
        <end position="513"/>
    </location>
</feature>
<feature type="region of interest" description="Disordered" evidence="2">
    <location>
        <begin position="475"/>
        <end position="513"/>
    </location>
</feature>
<feature type="compositionally biased region" description="Low complexity" evidence="2">
    <location>
        <begin position="488"/>
        <end position="497"/>
    </location>
</feature>
<feature type="binding site" evidence="1">
    <location>
        <position position="18"/>
    </location>
    <ligand>
        <name>ADP-alpha-D-glucose</name>
        <dbReference type="ChEBI" id="CHEBI:57498"/>
    </ligand>
</feature>
<sequence>MVQAKILFAAAEAAPLAKVGGMADVVGSLPVVLRKLGQDVRIIMPLYGFLWDKFGQEPGQYPRSKDPIWSKQVMGQVADIYESVLPGTDVPLYLVSHYCFAPHRIYYGEDEFWRFTFFANAVAEFAWTYYPWKPNIIHCHDWHTGMIPAWMHQAPDIGTVFTIHNLAYQGPWRWQLERMTWLPWYFSAHNTMAAGILYADQVNTVSPTYAMEIRTPLHGEGLQDLLAWKGERLRGILNGIDIDRFDPRTDPDLEANFSIDDLSGRAANKATLQAKLGLTVNPDTFLMGMVARLVEQKGIDLLIQALDRFLDYSDAQFVLLGGSGEAYYEGRIREMAERHPGKMAYQKGYQPKLAQLIYGGADAFLMPSRFEPCGISQMIAMRYGCVPIVRRTGGLVDTVSHHIPSKGIGTGYCFDRYEALDFYTCLARAWEAFQHKETWQALQKRGMASDFSWHRSALEYLRMYELILNLPLLPEKPPEPPNSPSSSPPKLKKPISSQPRSKGIPELQQRPEE</sequence>
<name>GLGA2_SYNJB</name>
<proteinExistence type="inferred from homology"/>
<gene>
    <name evidence="1" type="primary">glgA2</name>
    <name type="ordered locus">CYB_1734</name>
</gene>
<reference key="1">
    <citation type="journal article" date="2007" name="ISME J.">
        <title>Population level functional diversity in a microbial community revealed by comparative genomic and metagenomic analyses.</title>
        <authorList>
            <person name="Bhaya D."/>
            <person name="Grossman A.R."/>
            <person name="Steunou A.-S."/>
            <person name="Khuri N."/>
            <person name="Cohan F.M."/>
            <person name="Hamamura N."/>
            <person name="Melendrez M.C."/>
            <person name="Bateson M.M."/>
            <person name="Ward D.M."/>
            <person name="Heidelberg J.F."/>
        </authorList>
    </citation>
    <scope>NUCLEOTIDE SEQUENCE [LARGE SCALE GENOMIC DNA]</scope>
    <source>
        <strain>JA-2-3B'a(2-13)</strain>
    </source>
</reference>
<dbReference type="EC" id="2.4.1.21" evidence="1"/>
<dbReference type="EMBL" id="CP000240">
    <property type="protein sequence ID" value="ABD02691.1"/>
    <property type="molecule type" value="Genomic_DNA"/>
</dbReference>
<dbReference type="RefSeq" id="WP_011433335.1">
    <property type="nucleotide sequence ID" value="NC_007776.1"/>
</dbReference>
<dbReference type="SMR" id="Q2JKU0"/>
<dbReference type="STRING" id="321332.CYB_1734"/>
<dbReference type="CAZy" id="GT5">
    <property type="family name" value="Glycosyltransferase Family 5"/>
</dbReference>
<dbReference type="KEGG" id="cyb:CYB_1734"/>
<dbReference type="eggNOG" id="COG0297">
    <property type="taxonomic scope" value="Bacteria"/>
</dbReference>
<dbReference type="HOGENOM" id="CLU_009583_18_2_3"/>
<dbReference type="OrthoDB" id="9808590at2"/>
<dbReference type="UniPathway" id="UPA00164"/>
<dbReference type="Proteomes" id="UP000001938">
    <property type="component" value="Chromosome"/>
</dbReference>
<dbReference type="GO" id="GO:0009011">
    <property type="term" value="F:alpha-1,4-glucan glucosyltransferase (ADP-glucose donor) activity"/>
    <property type="evidence" value="ECO:0007669"/>
    <property type="project" value="UniProtKB-UniRule"/>
</dbReference>
<dbReference type="GO" id="GO:0004373">
    <property type="term" value="F:alpha-1,4-glucan glucosyltransferase (UDP-glucose donor) activity"/>
    <property type="evidence" value="ECO:0007669"/>
    <property type="project" value="InterPro"/>
</dbReference>
<dbReference type="GO" id="GO:0005978">
    <property type="term" value="P:glycogen biosynthetic process"/>
    <property type="evidence" value="ECO:0007669"/>
    <property type="project" value="UniProtKB-UniRule"/>
</dbReference>
<dbReference type="CDD" id="cd03791">
    <property type="entry name" value="GT5_Glycogen_synthase_DULL1-like"/>
    <property type="match status" value="1"/>
</dbReference>
<dbReference type="Gene3D" id="3.40.50.2000">
    <property type="entry name" value="Glycogen Phosphorylase B"/>
    <property type="match status" value="2"/>
</dbReference>
<dbReference type="HAMAP" id="MF_00484">
    <property type="entry name" value="Glycogen_synth"/>
    <property type="match status" value="1"/>
</dbReference>
<dbReference type="InterPro" id="IPR001296">
    <property type="entry name" value="Glyco_trans_1"/>
</dbReference>
<dbReference type="InterPro" id="IPR011835">
    <property type="entry name" value="GS/SS"/>
</dbReference>
<dbReference type="InterPro" id="IPR013534">
    <property type="entry name" value="Starch_synth_cat_dom"/>
</dbReference>
<dbReference type="NCBIfam" id="TIGR02095">
    <property type="entry name" value="glgA"/>
    <property type="match status" value="1"/>
</dbReference>
<dbReference type="NCBIfam" id="NF001900">
    <property type="entry name" value="PRK00654.1-3"/>
    <property type="match status" value="1"/>
</dbReference>
<dbReference type="PANTHER" id="PTHR45825:SF11">
    <property type="entry name" value="ALPHA AMYLASE DOMAIN-CONTAINING PROTEIN"/>
    <property type="match status" value="1"/>
</dbReference>
<dbReference type="PANTHER" id="PTHR45825">
    <property type="entry name" value="GRANULE-BOUND STARCH SYNTHASE 1, CHLOROPLASTIC/AMYLOPLASTIC"/>
    <property type="match status" value="1"/>
</dbReference>
<dbReference type="Pfam" id="PF08323">
    <property type="entry name" value="Glyco_transf_5"/>
    <property type="match status" value="1"/>
</dbReference>
<dbReference type="Pfam" id="PF00534">
    <property type="entry name" value="Glycos_transf_1"/>
    <property type="match status" value="1"/>
</dbReference>
<dbReference type="SUPFAM" id="SSF53756">
    <property type="entry name" value="UDP-Glycosyltransferase/glycogen phosphorylase"/>
    <property type="match status" value="1"/>
</dbReference>
<keyword id="KW-0320">Glycogen biosynthesis</keyword>
<keyword id="KW-0328">Glycosyltransferase</keyword>
<keyword id="KW-1185">Reference proteome</keyword>
<keyword id="KW-0808">Transferase</keyword>
<accession>Q2JKU0</accession>
<evidence type="ECO:0000255" key="1">
    <source>
        <dbReference type="HAMAP-Rule" id="MF_00484"/>
    </source>
</evidence>
<evidence type="ECO:0000256" key="2">
    <source>
        <dbReference type="SAM" id="MobiDB-lite"/>
    </source>
</evidence>